<comment type="function">
    <text evidence="1">Envelope protein part of the entry-fusion complex responsible for the virus membrane fusion with host cell membrane during virus entry. Also plays a role in cell-cell fusion (syncytium formation).</text>
</comment>
<comment type="subunit">
    <text evidence="1">Part of a stable entry-fusion complex (EFC) which is at least composed of proteins OPG143, OPG147, OPG155, OPG086, OPG094, OPG107, OPG104, and OPG099. Formation of the viral membrane is necessary for the assembly of the complex.</text>
</comment>
<comment type="subcellular location">
    <subcellularLocation>
        <location evidence="1">Virion membrane</location>
        <topology evidence="1">Single-pass membrane protein</topology>
    </subcellularLocation>
    <text evidence="1">Component of the mature virion (MV) membrane. The mature virion is located in the cytoplasm of infected cells and is probably released by cell lysis.</text>
</comment>
<comment type="similarity">
    <text evidence="3">Belongs to the orthopoxvirus OPG104 family.</text>
</comment>
<gene>
    <name type="primary">OPG104</name>
    <name type="ORF">MPXV087</name>
</gene>
<proteinExistence type="inferred from homology"/>
<sequence length="133" mass="15202">MTDEQIYAFCDTNKDDIRCKCIYPDKSIVRIGIDTRLPYYCWYEPCKRSDALLPASLKKNISRCNVSDCTISLGNVSITDSKLDVNNVCDSKRVATENIAVRYLNQEIRYPIIDIKWLPIGLLALAILILAFF</sequence>
<protein>
    <recommendedName>
        <fullName>Protein OPG104</fullName>
    </recommendedName>
    <alternativeName>
        <fullName>Protein J5</fullName>
    </alternativeName>
</protein>
<feature type="chain" id="PRO_0000457386" description="Protein OPG104">
    <location>
        <begin position="1"/>
        <end position="133"/>
    </location>
</feature>
<feature type="transmembrane region" description="Helical" evidence="2">
    <location>
        <begin position="112"/>
        <end position="132"/>
    </location>
</feature>
<reference key="1">
    <citation type="journal article" date="2022" name="J. Infect. Dis.">
        <title>Exportation of Monkeypox virus from the African continent.</title>
        <authorList>
            <person name="Mauldin M.R."/>
            <person name="McCollum A.M."/>
            <person name="Nakazawa Y.J."/>
            <person name="Mandra A."/>
            <person name="Whitehouse E.R."/>
            <person name="Davidson W."/>
            <person name="Zhao H."/>
            <person name="Gao J."/>
            <person name="Li Y."/>
            <person name="Doty J."/>
            <person name="Yinka-Ogunleye A."/>
            <person name="Akinpelu A."/>
            <person name="Aruna O."/>
            <person name="Naidoo D."/>
            <person name="Lewandowski K."/>
            <person name="Afrough B."/>
            <person name="Graham V."/>
            <person name="Aarons E."/>
            <person name="Hewson R."/>
            <person name="Vipond R."/>
            <person name="Dunning J."/>
            <person name="Chand M."/>
            <person name="Brown C."/>
            <person name="Cohen-Gihon I."/>
            <person name="Erez N."/>
            <person name="Shifman O."/>
            <person name="Israeli O."/>
            <person name="Sharon M."/>
            <person name="Schwartz E."/>
            <person name="Beth-Din A."/>
            <person name="Zvi A."/>
            <person name="Mak T.M."/>
            <person name="Ng Y.K."/>
            <person name="Cui L."/>
            <person name="Lin R.T.P."/>
            <person name="Olson V.A."/>
            <person name="Brooks T."/>
            <person name="Paran N."/>
            <person name="Ihekweazu C."/>
            <person name="Reynolds M.G."/>
        </authorList>
    </citation>
    <scope>NUCLEOTIDE SEQUENCE [LARGE SCALE GENOMIC DNA]</scope>
    <source>
        <strain>MPXV-M5312_HM12_Rivers</strain>
    </source>
</reference>
<evidence type="ECO:0000250" key="1">
    <source>
        <dbReference type="UniProtKB" id="P07618"/>
    </source>
</evidence>
<evidence type="ECO:0000255" key="2"/>
<evidence type="ECO:0000305" key="3"/>
<dbReference type="EMBL" id="MT903340">
    <property type="protein sequence ID" value="QNP12959.1"/>
    <property type="molecule type" value="Genomic_DNA"/>
</dbReference>
<dbReference type="RefSeq" id="YP_010377086.1">
    <property type="nucleotide sequence ID" value="NC_063383.1"/>
</dbReference>
<dbReference type="SMR" id="A0A7H0DN76"/>
<dbReference type="GeneID" id="72551499"/>
<dbReference type="Proteomes" id="UP000516359">
    <property type="component" value="Genome"/>
</dbReference>
<dbReference type="GO" id="GO:0016020">
    <property type="term" value="C:membrane"/>
    <property type="evidence" value="ECO:0007669"/>
    <property type="project" value="UniProtKB-KW"/>
</dbReference>
<dbReference type="GO" id="GO:0019031">
    <property type="term" value="C:viral envelope"/>
    <property type="evidence" value="ECO:0007669"/>
    <property type="project" value="UniProtKB-KW"/>
</dbReference>
<dbReference type="GO" id="GO:0055036">
    <property type="term" value="C:virion membrane"/>
    <property type="evidence" value="ECO:0007669"/>
    <property type="project" value="UniProtKB-SubCell"/>
</dbReference>
<dbReference type="GO" id="GO:0039663">
    <property type="term" value="P:membrane fusion involved in viral entry into host cell"/>
    <property type="evidence" value="ECO:0007669"/>
    <property type="project" value="UniProtKB-KW"/>
</dbReference>
<dbReference type="GO" id="GO:0046718">
    <property type="term" value="P:symbiont entry into host cell"/>
    <property type="evidence" value="ECO:0007669"/>
    <property type="project" value="UniProtKB-KW"/>
</dbReference>
<dbReference type="InterPro" id="IPR004251">
    <property type="entry name" value="Pox_virus_G9/A16"/>
</dbReference>
<dbReference type="Pfam" id="PF03003">
    <property type="entry name" value="Pox_G9-A16"/>
    <property type="match status" value="1"/>
</dbReference>
<organismHost>
    <name type="scientific">Cynomys gunnisoni</name>
    <name type="common">Gunnison's prairie dog</name>
    <name type="synonym">Spermophilus gunnisoni</name>
    <dbReference type="NCBI Taxonomy" id="45479"/>
</organismHost>
<organismHost>
    <name type="scientific">Cynomys leucurus</name>
    <name type="common">White-tailed prairie dog</name>
    <dbReference type="NCBI Taxonomy" id="99825"/>
</organismHost>
<organismHost>
    <name type="scientific">Cynomys ludovicianus</name>
    <name type="common">Black-tailed prairie dog</name>
    <dbReference type="NCBI Taxonomy" id="45480"/>
</organismHost>
<organismHost>
    <name type="scientific">Cynomys mexicanus</name>
    <name type="common">Mexican prairie dog</name>
    <dbReference type="NCBI Taxonomy" id="99826"/>
</organismHost>
<organismHost>
    <name type="scientific">Cynomys parvidens</name>
    <name type="common">Utah prairie dog</name>
    <dbReference type="NCBI Taxonomy" id="99827"/>
</organismHost>
<organismHost>
    <name type="scientific">Gliridae</name>
    <name type="common">dormice</name>
    <dbReference type="NCBI Taxonomy" id="30650"/>
</organismHost>
<organismHost>
    <name type="scientific">Heliosciurus ruwenzorii</name>
    <name type="common">Ruwenzori sun squirrel</name>
    <dbReference type="NCBI Taxonomy" id="226685"/>
</organismHost>
<organismHost>
    <name type="scientific">Homo sapiens</name>
    <name type="common">Human</name>
    <dbReference type="NCBI Taxonomy" id="9606"/>
</organismHost>
<organismHost>
    <name type="scientific">Mus musculus</name>
    <name type="common">Mouse</name>
    <dbReference type="NCBI Taxonomy" id="10090"/>
</organismHost>
<keyword id="KW-1168">Fusion of virus membrane with host membrane</keyword>
<keyword id="KW-0472">Membrane</keyword>
<keyword id="KW-1185">Reference proteome</keyword>
<keyword id="KW-0735">Signal-anchor</keyword>
<keyword id="KW-0812">Transmembrane</keyword>
<keyword id="KW-1133">Transmembrane helix</keyword>
<keyword id="KW-0261">Viral envelope protein</keyword>
<keyword id="KW-1162">Viral penetration into host cytoplasm</keyword>
<keyword id="KW-0946">Virion</keyword>
<keyword id="KW-1160">Virus entry into host cell</keyword>
<accession>A0A7H0DN76</accession>
<name>PG104_MONPV</name>
<organism>
    <name type="scientific">Monkeypox virus</name>
    <dbReference type="NCBI Taxonomy" id="10244"/>
    <lineage>
        <taxon>Viruses</taxon>
        <taxon>Varidnaviria</taxon>
        <taxon>Bamfordvirae</taxon>
        <taxon>Nucleocytoviricota</taxon>
        <taxon>Pokkesviricetes</taxon>
        <taxon>Chitovirales</taxon>
        <taxon>Poxviridae</taxon>
        <taxon>Chordopoxvirinae</taxon>
        <taxon>Orthopoxvirus</taxon>
    </lineage>
</organism>